<accession>P25512</accession>
<organism>
    <name type="scientific">Placobdella ornata</name>
    <name type="common">Turtle leech</name>
    <dbReference type="NCBI Taxonomy" id="6415"/>
    <lineage>
        <taxon>Eukaryota</taxon>
        <taxon>Metazoa</taxon>
        <taxon>Spiralia</taxon>
        <taxon>Lophotrochozoa</taxon>
        <taxon>Annelida</taxon>
        <taxon>Clitellata</taxon>
        <taxon>Hirudinea</taxon>
        <taxon>Rhynchobdellida</taxon>
        <taxon>Glossiphoniidae</taxon>
        <taxon>Placobdella</taxon>
    </lineage>
</organism>
<proteinExistence type="evidence at protein level"/>
<evidence type="ECO:0000305" key="1"/>
<keyword id="KW-0130">Cell adhesion</keyword>
<keyword id="KW-0903">Direct protein sequencing</keyword>
<keyword id="KW-0964">Secreted</keyword>
<sequence>IYVRPTKDELLYCGEFRELGQPDKKCRCDGKPCTVGRCKFARGDADDKCTSA</sequence>
<name>ORNC_PLAOR</name>
<reference key="1">
    <citation type="journal article" date="1991" name="Eur. J. Biochem.">
        <title>Ornatins: potent glycoprotein IIb-IIIa antagonists and platelet aggregation inhibitors from the leech Placobdella ornata.</title>
        <authorList>
            <person name="Mazur P."/>
            <person name="Henzel W.J."/>
            <person name="Seymour J.L."/>
            <person name="Lazarus R.A."/>
        </authorList>
    </citation>
    <scope>PROTEIN SEQUENCE</scope>
</reference>
<feature type="chain" id="PRO_0000215263" description="Ornatin-C">
    <location>
        <begin position="1"/>
        <end position="52"/>
    </location>
</feature>
<feature type="short sequence motif" description="Cell attachment site">
    <location>
        <begin position="42"/>
        <end position="44"/>
    </location>
</feature>
<comment type="function">
    <text>Potent inhibitor of fibrinogen interaction with platelet receptors expressed on glycoprotein IIb-IIIa complex. May prevent blood from clotting during either feeding and/or storage of ingested blood.</text>
</comment>
<comment type="subcellular location">
    <subcellularLocation>
        <location>Secreted</location>
    </subcellularLocation>
</comment>
<comment type="similarity">
    <text evidence="1">Belongs to the ornatin family.</text>
</comment>
<dbReference type="PIR" id="S19623">
    <property type="entry name" value="S19623"/>
</dbReference>
<dbReference type="SMR" id="P25512"/>
<dbReference type="GO" id="GO:0005576">
    <property type="term" value="C:extracellular region"/>
    <property type="evidence" value="ECO:0007669"/>
    <property type="project" value="UniProtKB-SubCell"/>
</dbReference>
<dbReference type="GO" id="GO:0007155">
    <property type="term" value="P:cell adhesion"/>
    <property type="evidence" value="ECO:0007669"/>
    <property type="project" value="UniProtKB-KW"/>
</dbReference>
<dbReference type="GO" id="GO:0030193">
    <property type="term" value="P:regulation of blood coagulation"/>
    <property type="evidence" value="ECO:0007669"/>
    <property type="project" value="InterPro"/>
</dbReference>
<dbReference type="InterPro" id="IPR002463">
    <property type="entry name" value="Ornatin"/>
</dbReference>
<dbReference type="Pfam" id="PF02088">
    <property type="entry name" value="Ornatin"/>
    <property type="match status" value="1"/>
</dbReference>
<dbReference type="PRINTS" id="PR01184">
    <property type="entry name" value="ORNATIN"/>
</dbReference>
<protein>
    <recommendedName>
        <fullName>Ornatin-C</fullName>
    </recommendedName>
</protein>